<proteinExistence type="inferred from homology"/>
<accession>Q1R1J7</accession>
<organism>
    <name type="scientific">Chromohalobacter salexigens (strain ATCC BAA-138 / DSM 3043 / CIP 106854 / NCIMB 13768 / 1H11)</name>
    <dbReference type="NCBI Taxonomy" id="290398"/>
    <lineage>
        <taxon>Bacteria</taxon>
        <taxon>Pseudomonadati</taxon>
        <taxon>Pseudomonadota</taxon>
        <taxon>Gammaproteobacteria</taxon>
        <taxon>Oceanospirillales</taxon>
        <taxon>Halomonadaceae</taxon>
        <taxon>Chromohalobacter</taxon>
    </lineage>
</organism>
<name>GPMI_CHRSD</name>
<keyword id="KW-0324">Glycolysis</keyword>
<keyword id="KW-0413">Isomerase</keyword>
<keyword id="KW-0464">Manganese</keyword>
<keyword id="KW-0479">Metal-binding</keyword>
<keyword id="KW-1185">Reference proteome</keyword>
<reference key="1">
    <citation type="journal article" date="2011" name="Stand. Genomic Sci.">
        <title>Complete genome sequence of the halophilic and highly halotolerant Chromohalobacter salexigens type strain (1H11(T)).</title>
        <authorList>
            <person name="Copeland A."/>
            <person name="O'Connor K."/>
            <person name="Lucas S."/>
            <person name="Lapidus A."/>
            <person name="Berry K.W."/>
            <person name="Detter J.C."/>
            <person name="Del Rio T.G."/>
            <person name="Hammon N."/>
            <person name="Dalin E."/>
            <person name="Tice H."/>
            <person name="Pitluck S."/>
            <person name="Bruce D."/>
            <person name="Goodwin L."/>
            <person name="Han C."/>
            <person name="Tapia R."/>
            <person name="Saunders E."/>
            <person name="Schmutz J."/>
            <person name="Brettin T."/>
            <person name="Larimer F."/>
            <person name="Land M."/>
            <person name="Hauser L."/>
            <person name="Vargas C."/>
            <person name="Nieto J.J."/>
            <person name="Kyrpides N.C."/>
            <person name="Ivanova N."/>
            <person name="Goker M."/>
            <person name="Klenk H.P."/>
            <person name="Csonka L.N."/>
            <person name="Woyke T."/>
        </authorList>
    </citation>
    <scope>NUCLEOTIDE SEQUENCE [LARGE SCALE GENOMIC DNA]</scope>
    <source>
        <strain>ATCC BAA-138 / DSM 3043 / CIP 106854 / NCIMB 13768 / 1H11</strain>
    </source>
</reference>
<feature type="chain" id="PRO_1000084297" description="2,3-bisphosphoglycerate-independent phosphoglycerate mutase">
    <location>
        <begin position="1"/>
        <end position="525"/>
    </location>
</feature>
<feature type="active site" description="Phosphoserine intermediate" evidence="1">
    <location>
        <position position="68"/>
    </location>
</feature>
<feature type="binding site" evidence="1">
    <location>
        <position position="18"/>
    </location>
    <ligand>
        <name>Mn(2+)</name>
        <dbReference type="ChEBI" id="CHEBI:29035"/>
        <label>2</label>
    </ligand>
</feature>
<feature type="binding site" evidence="1">
    <location>
        <position position="68"/>
    </location>
    <ligand>
        <name>Mn(2+)</name>
        <dbReference type="ChEBI" id="CHEBI:29035"/>
        <label>2</label>
    </ligand>
</feature>
<feature type="binding site" evidence="1">
    <location>
        <position position="129"/>
    </location>
    <ligand>
        <name>substrate</name>
    </ligand>
</feature>
<feature type="binding site" evidence="1">
    <location>
        <begin position="159"/>
        <end position="160"/>
    </location>
    <ligand>
        <name>substrate</name>
    </ligand>
</feature>
<feature type="binding site" evidence="1">
    <location>
        <position position="194"/>
    </location>
    <ligand>
        <name>substrate</name>
    </ligand>
</feature>
<feature type="binding site" evidence="1">
    <location>
        <position position="200"/>
    </location>
    <ligand>
        <name>substrate</name>
    </ligand>
</feature>
<feature type="binding site" evidence="1">
    <location>
        <begin position="269"/>
        <end position="272"/>
    </location>
    <ligand>
        <name>substrate</name>
    </ligand>
</feature>
<feature type="binding site" evidence="1">
    <location>
        <position position="345"/>
    </location>
    <ligand>
        <name>substrate</name>
    </ligand>
</feature>
<feature type="binding site" evidence="1">
    <location>
        <position position="413"/>
    </location>
    <ligand>
        <name>Mn(2+)</name>
        <dbReference type="ChEBI" id="CHEBI:29035"/>
        <label>1</label>
    </ligand>
</feature>
<feature type="binding site" evidence="1">
    <location>
        <position position="417"/>
    </location>
    <ligand>
        <name>Mn(2+)</name>
        <dbReference type="ChEBI" id="CHEBI:29035"/>
        <label>1</label>
    </ligand>
</feature>
<feature type="binding site" evidence="1">
    <location>
        <position position="454"/>
    </location>
    <ligand>
        <name>Mn(2+)</name>
        <dbReference type="ChEBI" id="CHEBI:29035"/>
        <label>2</label>
    </ligand>
</feature>
<feature type="binding site" evidence="1">
    <location>
        <position position="455"/>
    </location>
    <ligand>
        <name>Mn(2+)</name>
        <dbReference type="ChEBI" id="CHEBI:29035"/>
        <label>2</label>
    </ligand>
</feature>
<feature type="binding site" evidence="1">
    <location>
        <position position="473"/>
    </location>
    <ligand>
        <name>Mn(2+)</name>
        <dbReference type="ChEBI" id="CHEBI:29035"/>
        <label>1</label>
    </ligand>
</feature>
<evidence type="ECO:0000255" key="1">
    <source>
        <dbReference type="HAMAP-Rule" id="MF_01038"/>
    </source>
</evidence>
<protein>
    <recommendedName>
        <fullName evidence="1">2,3-bisphosphoglycerate-independent phosphoglycerate mutase</fullName>
        <shortName evidence="1">BPG-independent PGAM</shortName>
        <shortName evidence="1">Phosphoglyceromutase</shortName>
        <shortName evidence="1">iPGM</shortName>
        <ecNumber evidence="1">5.4.2.12</ecNumber>
    </recommendedName>
</protein>
<gene>
    <name evidence="1" type="primary">gpmI</name>
    <name type="ordered locus">Csal_0046</name>
</gene>
<comment type="function">
    <text evidence="1">Catalyzes the interconversion of 2-phosphoglycerate and 3-phosphoglycerate.</text>
</comment>
<comment type="catalytic activity">
    <reaction evidence="1">
        <text>(2R)-2-phosphoglycerate = (2R)-3-phosphoglycerate</text>
        <dbReference type="Rhea" id="RHEA:15901"/>
        <dbReference type="ChEBI" id="CHEBI:58272"/>
        <dbReference type="ChEBI" id="CHEBI:58289"/>
        <dbReference type="EC" id="5.4.2.12"/>
    </reaction>
</comment>
<comment type="cofactor">
    <cofactor evidence="1">
        <name>Mn(2+)</name>
        <dbReference type="ChEBI" id="CHEBI:29035"/>
    </cofactor>
    <text evidence="1">Binds 2 manganese ions per subunit.</text>
</comment>
<comment type="pathway">
    <text evidence="1">Carbohydrate degradation; glycolysis; pyruvate from D-glyceraldehyde 3-phosphate: step 3/5.</text>
</comment>
<comment type="subunit">
    <text evidence="1">Monomer.</text>
</comment>
<comment type="similarity">
    <text evidence="1">Belongs to the BPG-independent phosphoglycerate mutase family.</text>
</comment>
<sequence length="525" mass="56964">MADTHTQRPRPVALLILDGYGQNDDTEYNAVYSARTPVMDALKQRYPSTLLHTDGKYVGLPDGQMGNSEVGHMNLGAGRIVYQDFTRITKAIEDNELASNPVLTAPIDAAVAAGRAVHLLGLLSPGGVHSHEDHILAVAALAAERGAKHVYLHAFLDGRDTAPKSARASLERANARLAELFGADNAYVASIVGRYYAMDRDNRWDRVEQAYRVIVEGEGSQVATSAEAGLDAAYERGETDEFVAATSIRPHGEPVRMADGDAALFLNFRADRARELTRAFVEDDFSGFTRQARPKLAHEGLVMLTEYAADIPAPVAFPPTDLVNTLGETVAKRGLKQLRIAETEKYAHVTFFFSGGREDEFEGEHRELIPSPQDVKTYDEKPEMSAYELTDKLVAAIDAGTYDLIVCNYANGDMVGHSGNFDAAVKAIEAVDDCLGRVIEAIERAGGECLVTADHGNAEQMVHPETGNPQTAHTTFQVPLIYVTPRQGATLADDGSLCDLAPTLLTMMHEPVPEEMTGRVLIGNT</sequence>
<dbReference type="EC" id="5.4.2.12" evidence="1"/>
<dbReference type="EMBL" id="CP000285">
    <property type="protein sequence ID" value="ABE57411.1"/>
    <property type="molecule type" value="Genomic_DNA"/>
</dbReference>
<dbReference type="RefSeq" id="WP_011505357.1">
    <property type="nucleotide sequence ID" value="NC_007963.1"/>
</dbReference>
<dbReference type="SMR" id="Q1R1J7"/>
<dbReference type="STRING" id="290398.Csal_0046"/>
<dbReference type="GeneID" id="95332798"/>
<dbReference type="KEGG" id="csa:Csal_0046"/>
<dbReference type="eggNOG" id="COG0696">
    <property type="taxonomic scope" value="Bacteria"/>
</dbReference>
<dbReference type="HOGENOM" id="CLU_026099_2_0_6"/>
<dbReference type="OrthoDB" id="9800863at2"/>
<dbReference type="UniPathway" id="UPA00109">
    <property type="reaction ID" value="UER00186"/>
</dbReference>
<dbReference type="Proteomes" id="UP000000239">
    <property type="component" value="Chromosome"/>
</dbReference>
<dbReference type="GO" id="GO:0005829">
    <property type="term" value="C:cytosol"/>
    <property type="evidence" value="ECO:0007669"/>
    <property type="project" value="TreeGrafter"/>
</dbReference>
<dbReference type="GO" id="GO:0030145">
    <property type="term" value="F:manganese ion binding"/>
    <property type="evidence" value="ECO:0007669"/>
    <property type="project" value="UniProtKB-UniRule"/>
</dbReference>
<dbReference type="GO" id="GO:0004619">
    <property type="term" value="F:phosphoglycerate mutase activity"/>
    <property type="evidence" value="ECO:0007669"/>
    <property type="project" value="UniProtKB-EC"/>
</dbReference>
<dbReference type="GO" id="GO:0006007">
    <property type="term" value="P:glucose catabolic process"/>
    <property type="evidence" value="ECO:0007669"/>
    <property type="project" value="InterPro"/>
</dbReference>
<dbReference type="GO" id="GO:0006096">
    <property type="term" value="P:glycolytic process"/>
    <property type="evidence" value="ECO:0007669"/>
    <property type="project" value="UniProtKB-UniRule"/>
</dbReference>
<dbReference type="CDD" id="cd16010">
    <property type="entry name" value="iPGM"/>
    <property type="match status" value="1"/>
</dbReference>
<dbReference type="FunFam" id="3.40.1450.10:FF:000001">
    <property type="entry name" value="2,3-bisphosphoglycerate-independent phosphoglycerate mutase"/>
    <property type="match status" value="1"/>
</dbReference>
<dbReference type="Gene3D" id="3.40.720.10">
    <property type="entry name" value="Alkaline Phosphatase, subunit A"/>
    <property type="match status" value="1"/>
</dbReference>
<dbReference type="Gene3D" id="3.40.1450.10">
    <property type="entry name" value="BPG-independent phosphoglycerate mutase, domain B"/>
    <property type="match status" value="1"/>
</dbReference>
<dbReference type="HAMAP" id="MF_01038">
    <property type="entry name" value="GpmI"/>
    <property type="match status" value="1"/>
</dbReference>
<dbReference type="InterPro" id="IPR017850">
    <property type="entry name" value="Alkaline_phosphatase_core_sf"/>
</dbReference>
<dbReference type="InterPro" id="IPR011258">
    <property type="entry name" value="BPG-indep_PGM_N"/>
</dbReference>
<dbReference type="InterPro" id="IPR006124">
    <property type="entry name" value="Metalloenzyme"/>
</dbReference>
<dbReference type="InterPro" id="IPR036646">
    <property type="entry name" value="PGAM_B_sf"/>
</dbReference>
<dbReference type="InterPro" id="IPR005995">
    <property type="entry name" value="Pgm_bpd_ind"/>
</dbReference>
<dbReference type="NCBIfam" id="TIGR01307">
    <property type="entry name" value="pgm_bpd_ind"/>
    <property type="match status" value="1"/>
</dbReference>
<dbReference type="PANTHER" id="PTHR31637">
    <property type="entry name" value="2,3-BISPHOSPHOGLYCERATE-INDEPENDENT PHOSPHOGLYCERATE MUTASE"/>
    <property type="match status" value="1"/>
</dbReference>
<dbReference type="PANTHER" id="PTHR31637:SF0">
    <property type="entry name" value="2,3-BISPHOSPHOGLYCERATE-INDEPENDENT PHOSPHOGLYCERATE MUTASE"/>
    <property type="match status" value="1"/>
</dbReference>
<dbReference type="Pfam" id="PF06415">
    <property type="entry name" value="iPGM_N"/>
    <property type="match status" value="1"/>
</dbReference>
<dbReference type="Pfam" id="PF01676">
    <property type="entry name" value="Metalloenzyme"/>
    <property type="match status" value="1"/>
</dbReference>
<dbReference type="PIRSF" id="PIRSF001492">
    <property type="entry name" value="IPGAM"/>
    <property type="match status" value="1"/>
</dbReference>
<dbReference type="SUPFAM" id="SSF64158">
    <property type="entry name" value="2,3-Bisphosphoglycerate-independent phosphoglycerate mutase, substrate-binding domain"/>
    <property type="match status" value="1"/>
</dbReference>
<dbReference type="SUPFAM" id="SSF53649">
    <property type="entry name" value="Alkaline phosphatase-like"/>
    <property type="match status" value="1"/>
</dbReference>